<organism>
    <name type="scientific">Pseudomonas syringae pv. tomato (strain ATCC BAA-871 / DC3000)</name>
    <dbReference type="NCBI Taxonomy" id="223283"/>
    <lineage>
        <taxon>Bacteria</taxon>
        <taxon>Pseudomonadati</taxon>
        <taxon>Pseudomonadota</taxon>
        <taxon>Gammaproteobacteria</taxon>
        <taxon>Pseudomonadales</taxon>
        <taxon>Pseudomonadaceae</taxon>
        <taxon>Pseudomonas</taxon>
    </lineage>
</organism>
<feature type="chain" id="PRO_0000078641" description="Chaperone protein HscA homolog">
    <location>
        <begin position="1"/>
        <end position="620"/>
    </location>
</feature>
<reference key="1">
    <citation type="journal article" date="2003" name="Proc. Natl. Acad. Sci. U.S.A.">
        <title>The complete genome sequence of the Arabidopsis and tomato pathogen Pseudomonas syringae pv. tomato DC3000.</title>
        <authorList>
            <person name="Buell C.R."/>
            <person name="Joardar V."/>
            <person name="Lindeberg M."/>
            <person name="Selengut J."/>
            <person name="Paulsen I.T."/>
            <person name="Gwinn M.L."/>
            <person name="Dodson R.J."/>
            <person name="DeBoy R.T."/>
            <person name="Durkin A.S."/>
            <person name="Kolonay J.F."/>
            <person name="Madupu R."/>
            <person name="Daugherty S.C."/>
            <person name="Brinkac L.M."/>
            <person name="Beanan M.J."/>
            <person name="Haft D.H."/>
            <person name="Nelson W.C."/>
            <person name="Davidsen T.M."/>
            <person name="Zafar N."/>
            <person name="Zhou L."/>
            <person name="Liu J."/>
            <person name="Yuan Q."/>
            <person name="Khouri H.M."/>
            <person name="Fedorova N.B."/>
            <person name="Tran B."/>
            <person name="Russell D."/>
            <person name="Berry K.J."/>
            <person name="Utterback T.R."/>
            <person name="Van Aken S.E."/>
            <person name="Feldblyum T.V."/>
            <person name="D'Ascenzo M."/>
            <person name="Deng W.-L."/>
            <person name="Ramos A.R."/>
            <person name="Alfano J.R."/>
            <person name="Cartinhour S."/>
            <person name="Chatterjee A.K."/>
            <person name="Delaney T.P."/>
            <person name="Lazarowitz S.G."/>
            <person name="Martin G.B."/>
            <person name="Schneider D.J."/>
            <person name="Tang X."/>
            <person name="Bender C.L."/>
            <person name="White O."/>
            <person name="Fraser C.M."/>
            <person name="Collmer A."/>
        </authorList>
    </citation>
    <scope>NUCLEOTIDE SEQUENCE [LARGE SCALE GENOMIC DNA]</scope>
    <source>
        <strain>ATCC BAA-871 / DC3000</strain>
    </source>
</reference>
<protein>
    <recommendedName>
        <fullName evidence="1">Chaperone protein HscA homolog</fullName>
    </recommendedName>
</protein>
<dbReference type="EMBL" id="AE016853">
    <property type="protein sequence ID" value="AAO54948.1"/>
    <property type="molecule type" value="Genomic_DNA"/>
</dbReference>
<dbReference type="RefSeq" id="NP_791253.1">
    <property type="nucleotide sequence ID" value="NC_004578.1"/>
</dbReference>
<dbReference type="RefSeq" id="WP_011103546.1">
    <property type="nucleotide sequence ID" value="NC_004578.1"/>
</dbReference>
<dbReference type="SMR" id="Q886Z7"/>
<dbReference type="STRING" id="223283.PSPTO_1427"/>
<dbReference type="GeneID" id="1183064"/>
<dbReference type="KEGG" id="pst:PSPTO_1427"/>
<dbReference type="PATRIC" id="fig|223283.9.peg.1447"/>
<dbReference type="eggNOG" id="COG0443">
    <property type="taxonomic scope" value="Bacteria"/>
</dbReference>
<dbReference type="HOGENOM" id="CLU_005965_2_3_6"/>
<dbReference type="OrthoDB" id="9766019at2"/>
<dbReference type="PhylomeDB" id="Q886Z7"/>
<dbReference type="Proteomes" id="UP000002515">
    <property type="component" value="Chromosome"/>
</dbReference>
<dbReference type="GO" id="GO:0005524">
    <property type="term" value="F:ATP binding"/>
    <property type="evidence" value="ECO:0007669"/>
    <property type="project" value="UniProtKB-KW"/>
</dbReference>
<dbReference type="GO" id="GO:0016887">
    <property type="term" value="F:ATP hydrolysis activity"/>
    <property type="evidence" value="ECO:0007669"/>
    <property type="project" value="UniProtKB-UniRule"/>
</dbReference>
<dbReference type="GO" id="GO:0140662">
    <property type="term" value="F:ATP-dependent protein folding chaperone"/>
    <property type="evidence" value="ECO:0007669"/>
    <property type="project" value="InterPro"/>
</dbReference>
<dbReference type="GO" id="GO:0051082">
    <property type="term" value="F:unfolded protein binding"/>
    <property type="evidence" value="ECO:0007669"/>
    <property type="project" value="InterPro"/>
</dbReference>
<dbReference type="GO" id="GO:0016226">
    <property type="term" value="P:iron-sulfur cluster assembly"/>
    <property type="evidence" value="ECO:0007669"/>
    <property type="project" value="InterPro"/>
</dbReference>
<dbReference type="CDD" id="cd10236">
    <property type="entry name" value="ASKHA_NBD_HSP70_HscA"/>
    <property type="match status" value="1"/>
</dbReference>
<dbReference type="FunFam" id="3.30.420.40:FF:000046">
    <property type="entry name" value="Chaperone protein HscA"/>
    <property type="match status" value="1"/>
</dbReference>
<dbReference type="FunFam" id="2.60.34.10:FF:000005">
    <property type="entry name" value="Chaperone protein HscA homolog"/>
    <property type="match status" value="1"/>
</dbReference>
<dbReference type="Gene3D" id="1.20.1270.10">
    <property type="match status" value="1"/>
</dbReference>
<dbReference type="Gene3D" id="3.30.420.40">
    <property type="match status" value="2"/>
</dbReference>
<dbReference type="Gene3D" id="3.90.640.10">
    <property type="entry name" value="Actin, Chain A, domain 4"/>
    <property type="match status" value="1"/>
</dbReference>
<dbReference type="Gene3D" id="2.60.34.10">
    <property type="entry name" value="Substrate Binding Domain Of DNAk, Chain A, domain 1"/>
    <property type="match status" value="1"/>
</dbReference>
<dbReference type="HAMAP" id="MF_00679">
    <property type="entry name" value="HscA"/>
    <property type="match status" value="1"/>
</dbReference>
<dbReference type="InterPro" id="IPR043129">
    <property type="entry name" value="ATPase_NBD"/>
</dbReference>
<dbReference type="InterPro" id="IPR018181">
    <property type="entry name" value="Heat_shock_70_CS"/>
</dbReference>
<dbReference type="InterPro" id="IPR042039">
    <property type="entry name" value="HscA_NBD"/>
</dbReference>
<dbReference type="InterPro" id="IPR029048">
    <property type="entry name" value="HSP70_C_sf"/>
</dbReference>
<dbReference type="InterPro" id="IPR029047">
    <property type="entry name" value="HSP70_peptide-bd_sf"/>
</dbReference>
<dbReference type="InterPro" id="IPR013126">
    <property type="entry name" value="Hsp_70_fam"/>
</dbReference>
<dbReference type="InterPro" id="IPR010236">
    <property type="entry name" value="ISC_FeS_clus_asmbl_HscA"/>
</dbReference>
<dbReference type="NCBIfam" id="TIGR01991">
    <property type="entry name" value="HscA"/>
    <property type="match status" value="1"/>
</dbReference>
<dbReference type="NCBIfam" id="NF003520">
    <property type="entry name" value="PRK05183.1"/>
    <property type="match status" value="1"/>
</dbReference>
<dbReference type="PANTHER" id="PTHR19375">
    <property type="entry name" value="HEAT SHOCK PROTEIN 70KDA"/>
    <property type="match status" value="1"/>
</dbReference>
<dbReference type="Pfam" id="PF00012">
    <property type="entry name" value="HSP70"/>
    <property type="match status" value="1"/>
</dbReference>
<dbReference type="PRINTS" id="PR00301">
    <property type="entry name" value="HEATSHOCK70"/>
</dbReference>
<dbReference type="SUPFAM" id="SSF53067">
    <property type="entry name" value="Actin-like ATPase domain"/>
    <property type="match status" value="2"/>
</dbReference>
<dbReference type="SUPFAM" id="SSF100934">
    <property type="entry name" value="Heat shock protein 70kD (HSP70), C-terminal subdomain"/>
    <property type="match status" value="1"/>
</dbReference>
<dbReference type="SUPFAM" id="SSF100920">
    <property type="entry name" value="Heat shock protein 70kD (HSP70), peptide-binding domain"/>
    <property type="match status" value="1"/>
</dbReference>
<dbReference type="PROSITE" id="PS00297">
    <property type="entry name" value="HSP70_1"/>
    <property type="match status" value="1"/>
</dbReference>
<dbReference type="PROSITE" id="PS00329">
    <property type="entry name" value="HSP70_2"/>
    <property type="match status" value="1"/>
</dbReference>
<dbReference type="PROSITE" id="PS01036">
    <property type="entry name" value="HSP70_3"/>
    <property type="match status" value="2"/>
</dbReference>
<keyword id="KW-0067">ATP-binding</keyword>
<keyword id="KW-0143">Chaperone</keyword>
<keyword id="KW-0547">Nucleotide-binding</keyword>
<keyword id="KW-1185">Reference proteome</keyword>
<sequence length="620" mass="66370">MALLQIAEPGLSPQPHQRRLAVGIDLGTTNSLVAAVRSGLSEPLADAEGQVILPSAVRYHADRVEVGQAAKAAASQDPFNTVLSVKRLMGRGLSDVKQLGEQLPYRFVGGESHMPFIDTVQGAKSPVEVSADILKVLRQRAEAALGGELVGAVITVPAYFDDSQRQATKDAAKLAGLNVLRLLNEPTAAAVAYGLDQKAEGVIAIYDLGGGTFDISILRLTGGVFEVLATGGDTALGGDDFDHAIASWIVADAGLSADLDPSAQRSLLQAACSAKEALTDAEFVEVTHGEWRGTLTRDALNALIEPMIARSLKACRRAVRDTGIELEEVEAVVMVGGSTRVPRVREAVAELFGRQPLTQIDPDQVVAIGAAIQADTLAGNKRDGGELLLLDVIPLSLGLETMGGLMEKVIPRNTTIPVARGQEFTTYKDGQTAMKIHVLQGERELVSDCRSLARFELRGIPPMVAGAAKIRVTFQVDADGLLSVSAREMGSGIESSIQVKPSYGLTDDEVTRMLKDSFEYAGDDKVARVLREHQVDAERLLEAVQGALDADGERLLDEEERLVINLQMDELRELMQGTDGYAIEQQTKRLSQVTDAFAARRLDSTVKAALAGRNLNEIEE</sequence>
<evidence type="ECO:0000255" key="1">
    <source>
        <dbReference type="HAMAP-Rule" id="MF_00679"/>
    </source>
</evidence>
<accession>Q886Z7</accession>
<gene>
    <name evidence="1" type="primary">hscA</name>
    <name type="ordered locus">PSPTO_1427</name>
</gene>
<name>HSCA_PSESM</name>
<comment type="function">
    <text evidence="1">Chaperone involved in the maturation of iron-sulfur cluster-containing proteins. Has a low intrinsic ATPase activity which is markedly stimulated by HscB.</text>
</comment>
<comment type="similarity">
    <text evidence="1">Belongs to the heat shock protein 70 family.</text>
</comment>
<proteinExistence type="inferred from homology"/>